<reference key="1">
    <citation type="journal article" date="2009" name="Environ. Microbiol.">
        <title>Contribution of mobile genetic elements to Desulfovibrio vulgaris genome plasticity.</title>
        <authorList>
            <person name="Walker C.B."/>
            <person name="Stolyar S."/>
            <person name="Chivian D."/>
            <person name="Pinel N."/>
            <person name="Gabster J.A."/>
            <person name="Dehal P.S."/>
            <person name="He Z."/>
            <person name="Yang Z.K."/>
            <person name="Yen H.C."/>
            <person name="Zhou J."/>
            <person name="Wall J.D."/>
            <person name="Hazen T.C."/>
            <person name="Arkin A.P."/>
            <person name="Stahl D.A."/>
        </authorList>
    </citation>
    <scope>NUCLEOTIDE SEQUENCE [LARGE SCALE GENOMIC DNA]</scope>
    <source>
        <strain>DP4</strain>
    </source>
</reference>
<dbReference type="EC" id="6.3.5.2" evidence="1"/>
<dbReference type="EMBL" id="CP000527">
    <property type="protein sequence ID" value="ABM28966.1"/>
    <property type="molecule type" value="Genomic_DNA"/>
</dbReference>
<dbReference type="RefSeq" id="WP_010938342.1">
    <property type="nucleotide sequence ID" value="NC_008751.1"/>
</dbReference>
<dbReference type="SMR" id="A1VEV0"/>
<dbReference type="KEGG" id="dvl:Dvul_1950"/>
<dbReference type="HOGENOM" id="CLU_014340_0_5_7"/>
<dbReference type="UniPathway" id="UPA00189">
    <property type="reaction ID" value="UER00296"/>
</dbReference>
<dbReference type="Proteomes" id="UP000009173">
    <property type="component" value="Chromosome"/>
</dbReference>
<dbReference type="GO" id="GO:0005829">
    <property type="term" value="C:cytosol"/>
    <property type="evidence" value="ECO:0007669"/>
    <property type="project" value="TreeGrafter"/>
</dbReference>
<dbReference type="GO" id="GO:0005524">
    <property type="term" value="F:ATP binding"/>
    <property type="evidence" value="ECO:0007669"/>
    <property type="project" value="UniProtKB-UniRule"/>
</dbReference>
<dbReference type="GO" id="GO:0003921">
    <property type="term" value="F:GMP synthase activity"/>
    <property type="evidence" value="ECO:0007669"/>
    <property type="project" value="InterPro"/>
</dbReference>
<dbReference type="CDD" id="cd01742">
    <property type="entry name" value="GATase1_GMP_Synthase"/>
    <property type="match status" value="1"/>
</dbReference>
<dbReference type="CDD" id="cd01997">
    <property type="entry name" value="GMP_synthase_C"/>
    <property type="match status" value="1"/>
</dbReference>
<dbReference type="FunFam" id="3.30.300.10:FF:000002">
    <property type="entry name" value="GMP synthase [glutamine-hydrolyzing]"/>
    <property type="match status" value="1"/>
</dbReference>
<dbReference type="FunFam" id="3.40.50.620:FF:000001">
    <property type="entry name" value="GMP synthase [glutamine-hydrolyzing]"/>
    <property type="match status" value="1"/>
</dbReference>
<dbReference type="FunFam" id="3.40.50.880:FF:000001">
    <property type="entry name" value="GMP synthase [glutamine-hydrolyzing]"/>
    <property type="match status" value="1"/>
</dbReference>
<dbReference type="Gene3D" id="3.30.300.10">
    <property type="match status" value="1"/>
</dbReference>
<dbReference type="Gene3D" id="3.40.50.880">
    <property type="match status" value="1"/>
</dbReference>
<dbReference type="Gene3D" id="3.40.50.620">
    <property type="entry name" value="HUPs"/>
    <property type="match status" value="1"/>
</dbReference>
<dbReference type="HAMAP" id="MF_00344">
    <property type="entry name" value="GMP_synthase"/>
    <property type="match status" value="1"/>
</dbReference>
<dbReference type="InterPro" id="IPR029062">
    <property type="entry name" value="Class_I_gatase-like"/>
</dbReference>
<dbReference type="InterPro" id="IPR017926">
    <property type="entry name" value="GATASE"/>
</dbReference>
<dbReference type="InterPro" id="IPR001674">
    <property type="entry name" value="GMP_synth_C"/>
</dbReference>
<dbReference type="InterPro" id="IPR004739">
    <property type="entry name" value="GMP_synth_GATase"/>
</dbReference>
<dbReference type="InterPro" id="IPR022955">
    <property type="entry name" value="GMP_synthase"/>
</dbReference>
<dbReference type="InterPro" id="IPR025777">
    <property type="entry name" value="GMPS_ATP_PPase_dom"/>
</dbReference>
<dbReference type="InterPro" id="IPR002500">
    <property type="entry name" value="PAPS_reduct_dom"/>
</dbReference>
<dbReference type="InterPro" id="IPR014729">
    <property type="entry name" value="Rossmann-like_a/b/a_fold"/>
</dbReference>
<dbReference type="NCBIfam" id="TIGR00884">
    <property type="entry name" value="guaA_Cterm"/>
    <property type="match status" value="1"/>
</dbReference>
<dbReference type="NCBIfam" id="TIGR00888">
    <property type="entry name" value="guaA_Nterm"/>
    <property type="match status" value="1"/>
</dbReference>
<dbReference type="NCBIfam" id="NF000848">
    <property type="entry name" value="PRK00074.1"/>
    <property type="match status" value="1"/>
</dbReference>
<dbReference type="PANTHER" id="PTHR11922:SF2">
    <property type="entry name" value="GMP SYNTHASE [GLUTAMINE-HYDROLYZING]"/>
    <property type="match status" value="1"/>
</dbReference>
<dbReference type="PANTHER" id="PTHR11922">
    <property type="entry name" value="GMP SYNTHASE-RELATED"/>
    <property type="match status" value="1"/>
</dbReference>
<dbReference type="Pfam" id="PF00117">
    <property type="entry name" value="GATase"/>
    <property type="match status" value="1"/>
</dbReference>
<dbReference type="Pfam" id="PF00958">
    <property type="entry name" value="GMP_synt_C"/>
    <property type="match status" value="1"/>
</dbReference>
<dbReference type="Pfam" id="PF01507">
    <property type="entry name" value="PAPS_reduct"/>
    <property type="match status" value="1"/>
</dbReference>
<dbReference type="PRINTS" id="PR00097">
    <property type="entry name" value="ANTSNTHASEII"/>
</dbReference>
<dbReference type="PRINTS" id="PR00096">
    <property type="entry name" value="GATASE"/>
</dbReference>
<dbReference type="SUPFAM" id="SSF52402">
    <property type="entry name" value="Adenine nucleotide alpha hydrolases-like"/>
    <property type="match status" value="1"/>
</dbReference>
<dbReference type="SUPFAM" id="SSF52317">
    <property type="entry name" value="Class I glutamine amidotransferase-like"/>
    <property type="match status" value="1"/>
</dbReference>
<dbReference type="SUPFAM" id="SSF54810">
    <property type="entry name" value="GMP synthetase C-terminal dimerisation domain"/>
    <property type="match status" value="1"/>
</dbReference>
<dbReference type="PROSITE" id="PS51273">
    <property type="entry name" value="GATASE_TYPE_1"/>
    <property type="match status" value="1"/>
</dbReference>
<dbReference type="PROSITE" id="PS51553">
    <property type="entry name" value="GMPS_ATP_PPASE"/>
    <property type="match status" value="1"/>
</dbReference>
<proteinExistence type="inferred from homology"/>
<gene>
    <name evidence="1" type="primary">guaA</name>
    <name type="ordered locus">Dvul_1950</name>
</gene>
<protein>
    <recommendedName>
        <fullName evidence="1">GMP synthase [glutamine-hydrolyzing]</fullName>
        <ecNumber evidence="1">6.3.5.2</ecNumber>
    </recommendedName>
    <alternativeName>
        <fullName evidence="1">GMP synthetase</fullName>
    </alternativeName>
    <alternativeName>
        <fullName evidence="1">Glutamine amidotransferase</fullName>
    </alternativeName>
</protein>
<comment type="function">
    <text evidence="1">Catalyzes the synthesis of GMP from XMP.</text>
</comment>
<comment type="catalytic activity">
    <reaction evidence="1">
        <text>XMP + L-glutamine + ATP + H2O = GMP + L-glutamate + AMP + diphosphate + 2 H(+)</text>
        <dbReference type="Rhea" id="RHEA:11680"/>
        <dbReference type="ChEBI" id="CHEBI:15377"/>
        <dbReference type="ChEBI" id="CHEBI:15378"/>
        <dbReference type="ChEBI" id="CHEBI:29985"/>
        <dbReference type="ChEBI" id="CHEBI:30616"/>
        <dbReference type="ChEBI" id="CHEBI:33019"/>
        <dbReference type="ChEBI" id="CHEBI:57464"/>
        <dbReference type="ChEBI" id="CHEBI:58115"/>
        <dbReference type="ChEBI" id="CHEBI:58359"/>
        <dbReference type="ChEBI" id="CHEBI:456215"/>
        <dbReference type="EC" id="6.3.5.2"/>
    </reaction>
</comment>
<comment type="pathway">
    <text evidence="1">Purine metabolism; GMP biosynthesis; GMP from XMP (L-Gln route): step 1/1.</text>
</comment>
<comment type="subunit">
    <text evidence="1">Homodimer.</text>
</comment>
<name>GUAA_NITV4</name>
<accession>A1VEV0</accession>
<sequence>MDAQTKVIIIDYGSQVTQLIARRVREAGVYSEIHPCIVTAEQVRAMKPAAIILSGGPASVGEKDAPALEKGLLDLGVPVLGICYGMQLLGQDLGGELATSETREYGPADLTLTAPCPLWDGLDLGTTSRVWMSHGDKVKTPPPGFKVVGRTATLEVAAMADEARRIYAVQFHPEVHHSEDGARIINNFLFHVAKLKADWTMSSFVERAVKEMAEVVGDRHVVCALSGGIDSTVVAVLLHKAIGKQLHCIFVDNGVLRLNEGQEVVDYLREHFDLNLKYVQAQERFLSKLHGVDDPEQKRKIIGYTFIEVFDEEAKALGHVDFLAQGTLYPDVIESVSHKGPSAVIKSHHNVGGLPEKMNLKLIEPLRELFKDEVRKVAAELGLPDFIIWRHPFPGPGLAIRVIGEITEERLDILRRADKVVQQELMSSGWYRKVWQGFAVLLPLKTVGVMGDGRTYEHVIALRIVDSVDAMTADWARLPSELLERISSRIINEVKGVNRVVYDISSKPPSTIEWE</sequence>
<evidence type="ECO:0000255" key="1">
    <source>
        <dbReference type="HAMAP-Rule" id="MF_00344"/>
    </source>
</evidence>
<keyword id="KW-0067">ATP-binding</keyword>
<keyword id="KW-0315">Glutamine amidotransferase</keyword>
<keyword id="KW-0332">GMP biosynthesis</keyword>
<keyword id="KW-0436">Ligase</keyword>
<keyword id="KW-0547">Nucleotide-binding</keyword>
<keyword id="KW-0658">Purine biosynthesis</keyword>
<organism>
    <name type="scientific">Nitratidesulfovibrio vulgaris (strain DP4)</name>
    <name type="common">Desulfovibrio vulgaris</name>
    <dbReference type="NCBI Taxonomy" id="391774"/>
    <lineage>
        <taxon>Bacteria</taxon>
        <taxon>Pseudomonadati</taxon>
        <taxon>Thermodesulfobacteriota</taxon>
        <taxon>Desulfovibrionia</taxon>
        <taxon>Desulfovibrionales</taxon>
        <taxon>Desulfovibrionaceae</taxon>
        <taxon>Nitratidesulfovibrio</taxon>
    </lineage>
</organism>
<feature type="chain" id="PRO_1000120276" description="GMP synthase [glutamine-hydrolyzing]">
    <location>
        <begin position="1"/>
        <end position="515"/>
    </location>
</feature>
<feature type="domain" description="Glutamine amidotransferase type-1" evidence="1">
    <location>
        <begin position="6"/>
        <end position="198"/>
    </location>
</feature>
<feature type="domain" description="GMPS ATP-PPase" evidence="1">
    <location>
        <begin position="199"/>
        <end position="390"/>
    </location>
</feature>
<feature type="active site" description="Nucleophile" evidence="1">
    <location>
        <position position="83"/>
    </location>
</feature>
<feature type="active site" evidence="1">
    <location>
        <position position="172"/>
    </location>
</feature>
<feature type="active site" evidence="1">
    <location>
        <position position="174"/>
    </location>
</feature>
<feature type="binding site" evidence="1">
    <location>
        <begin position="226"/>
        <end position="232"/>
    </location>
    <ligand>
        <name>ATP</name>
        <dbReference type="ChEBI" id="CHEBI:30616"/>
    </ligand>
</feature>